<protein>
    <recommendedName>
        <fullName evidence="1">Histidinol-phosphate aminotransferase</fullName>
        <ecNumber evidence="1">2.6.1.9</ecNumber>
    </recommendedName>
    <alternativeName>
        <fullName evidence="1">Imidazole acetol-phosphate transaminase</fullName>
    </alternativeName>
</protein>
<dbReference type="EC" id="2.6.1.9" evidence="1"/>
<dbReference type="EMBL" id="CP000607">
    <property type="protein sequence ID" value="ABP36769.1"/>
    <property type="molecule type" value="Genomic_DNA"/>
</dbReference>
<dbReference type="SMR" id="A4SE60"/>
<dbReference type="STRING" id="290318.Cvib_0754"/>
<dbReference type="KEGG" id="pvi:Cvib_0754"/>
<dbReference type="eggNOG" id="COG0079">
    <property type="taxonomic scope" value="Bacteria"/>
</dbReference>
<dbReference type="HOGENOM" id="CLU_017584_3_1_10"/>
<dbReference type="OrthoDB" id="9813612at2"/>
<dbReference type="UniPathway" id="UPA00031">
    <property type="reaction ID" value="UER00012"/>
</dbReference>
<dbReference type="GO" id="GO:0004400">
    <property type="term" value="F:histidinol-phosphate transaminase activity"/>
    <property type="evidence" value="ECO:0007669"/>
    <property type="project" value="UniProtKB-UniRule"/>
</dbReference>
<dbReference type="GO" id="GO:0030170">
    <property type="term" value="F:pyridoxal phosphate binding"/>
    <property type="evidence" value="ECO:0007669"/>
    <property type="project" value="InterPro"/>
</dbReference>
<dbReference type="GO" id="GO:0000105">
    <property type="term" value="P:L-histidine biosynthetic process"/>
    <property type="evidence" value="ECO:0007669"/>
    <property type="project" value="UniProtKB-UniRule"/>
</dbReference>
<dbReference type="CDD" id="cd00609">
    <property type="entry name" value="AAT_like"/>
    <property type="match status" value="1"/>
</dbReference>
<dbReference type="Gene3D" id="3.90.1150.10">
    <property type="entry name" value="Aspartate Aminotransferase, domain 1"/>
    <property type="match status" value="1"/>
</dbReference>
<dbReference type="Gene3D" id="3.40.640.10">
    <property type="entry name" value="Type I PLP-dependent aspartate aminotransferase-like (Major domain)"/>
    <property type="match status" value="1"/>
</dbReference>
<dbReference type="HAMAP" id="MF_01023">
    <property type="entry name" value="HisC_aminotrans_2"/>
    <property type="match status" value="1"/>
</dbReference>
<dbReference type="InterPro" id="IPR001917">
    <property type="entry name" value="Aminotrans_II_pyridoxalP_BS"/>
</dbReference>
<dbReference type="InterPro" id="IPR004839">
    <property type="entry name" value="Aminotransferase_I/II_large"/>
</dbReference>
<dbReference type="InterPro" id="IPR005861">
    <property type="entry name" value="HisP_aminotrans"/>
</dbReference>
<dbReference type="InterPro" id="IPR015424">
    <property type="entry name" value="PyrdxlP-dep_Trfase"/>
</dbReference>
<dbReference type="InterPro" id="IPR015421">
    <property type="entry name" value="PyrdxlP-dep_Trfase_major"/>
</dbReference>
<dbReference type="InterPro" id="IPR015422">
    <property type="entry name" value="PyrdxlP-dep_Trfase_small"/>
</dbReference>
<dbReference type="NCBIfam" id="TIGR01141">
    <property type="entry name" value="hisC"/>
    <property type="match status" value="1"/>
</dbReference>
<dbReference type="PANTHER" id="PTHR42885:SF2">
    <property type="entry name" value="HISTIDINOL-PHOSPHATE AMINOTRANSFERASE"/>
    <property type="match status" value="1"/>
</dbReference>
<dbReference type="PANTHER" id="PTHR42885">
    <property type="entry name" value="HISTIDINOL-PHOSPHATE AMINOTRANSFERASE-RELATED"/>
    <property type="match status" value="1"/>
</dbReference>
<dbReference type="Pfam" id="PF00155">
    <property type="entry name" value="Aminotran_1_2"/>
    <property type="match status" value="1"/>
</dbReference>
<dbReference type="SUPFAM" id="SSF53383">
    <property type="entry name" value="PLP-dependent transferases"/>
    <property type="match status" value="1"/>
</dbReference>
<dbReference type="PROSITE" id="PS00599">
    <property type="entry name" value="AA_TRANSFER_CLASS_2"/>
    <property type="match status" value="1"/>
</dbReference>
<evidence type="ECO:0000255" key="1">
    <source>
        <dbReference type="HAMAP-Rule" id="MF_01023"/>
    </source>
</evidence>
<sequence>MQRDIMRYLNPSLRDIAAYSVEGGQQAAIKLNQNESPFDLPMWLKDAIVSEFVREPWNRYPDILPYRGTKAYADFLGVPAEGVMMGNGSNELLYTIFLACLGPGRKILVPDPSFSLYEKLALLLQASLVRVPLKASLDFDVDAIIQSAQEESVDFVVLSSPNNPTGKSITFDDIRRIASSCDALVLVDEAYIEFSRQDSALPLIEEFPNLVVLRTMSKALALAGMRIGFAIGRPELIAEIAKPKIPFASSRLAEITLMHVLENYAIVTDAVSYILNARDELYGELLSVQGVEPFMSDTNFLVIRVPDADAVFRKLIGRGILVRNVSGYHLMKNCLRFNIGLPDENSRLLDALLAINGGMA</sequence>
<name>HIS8_CHLPM</name>
<keyword id="KW-0028">Amino-acid biosynthesis</keyword>
<keyword id="KW-0032">Aminotransferase</keyword>
<keyword id="KW-0368">Histidine biosynthesis</keyword>
<keyword id="KW-0663">Pyridoxal phosphate</keyword>
<keyword id="KW-0808">Transferase</keyword>
<gene>
    <name evidence="1" type="primary">hisC</name>
    <name type="ordered locus">Cvib_0754</name>
</gene>
<accession>A4SE60</accession>
<proteinExistence type="inferred from homology"/>
<organism>
    <name type="scientific">Chlorobium phaeovibrioides (strain DSM 265 / 1930)</name>
    <name type="common">Prosthecochloris vibrioformis (strain DSM 265)</name>
    <dbReference type="NCBI Taxonomy" id="290318"/>
    <lineage>
        <taxon>Bacteria</taxon>
        <taxon>Pseudomonadati</taxon>
        <taxon>Chlorobiota</taxon>
        <taxon>Chlorobiia</taxon>
        <taxon>Chlorobiales</taxon>
        <taxon>Chlorobiaceae</taxon>
        <taxon>Chlorobium/Pelodictyon group</taxon>
        <taxon>Chlorobium</taxon>
    </lineage>
</organism>
<comment type="catalytic activity">
    <reaction evidence="1">
        <text>L-histidinol phosphate + 2-oxoglutarate = 3-(imidazol-4-yl)-2-oxopropyl phosphate + L-glutamate</text>
        <dbReference type="Rhea" id="RHEA:23744"/>
        <dbReference type="ChEBI" id="CHEBI:16810"/>
        <dbReference type="ChEBI" id="CHEBI:29985"/>
        <dbReference type="ChEBI" id="CHEBI:57766"/>
        <dbReference type="ChEBI" id="CHEBI:57980"/>
        <dbReference type="EC" id="2.6.1.9"/>
    </reaction>
</comment>
<comment type="cofactor">
    <cofactor evidence="1">
        <name>pyridoxal 5'-phosphate</name>
        <dbReference type="ChEBI" id="CHEBI:597326"/>
    </cofactor>
</comment>
<comment type="pathway">
    <text evidence="1">Amino-acid biosynthesis; L-histidine biosynthesis; L-histidine from 5-phospho-alpha-D-ribose 1-diphosphate: step 7/9.</text>
</comment>
<comment type="subunit">
    <text evidence="1">Homodimer.</text>
</comment>
<comment type="similarity">
    <text evidence="1">Belongs to the class-II pyridoxal-phosphate-dependent aminotransferase family. Histidinol-phosphate aminotransferase subfamily.</text>
</comment>
<reference key="1">
    <citation type="submission" date="2007-03" db="EMBL/GenBank/DDBJ databases">
        <title>Complete sequence of Prosthecochloris vibrioformis DSM 265.</title>
        <authorList>
            <consortium name="US DOE Joint Genome Institute"/>
            <person name="Copeland A."/>
            <person name="Lucas S."/>
            <person name="Lapidus A."/>
            <person name="Barry K."/>
            <person name="Detter J.C."/>
            <person name="Glavina del Rio T."/>
            <person name="Hammon N."/>
            <person name="Israni S."/>
            <person name="Pitluck S."/>
            <person name="Schmutz J."/>
            <person name="Larimer F."/>
            <person name="Land M."/>
            <person name="Hauser L."/>
            <person name="Mikhailova N."/>
            <person name="Li T."/>
            <person name="Overmann J."/>
            <person name="Schuster S.C."/>
            <person name="Bryant D.A."/>
            <person name="Richardson P."/>
        </authorList>
    </citation>
    <scope>NUCLEOTIDE SEQUENCE [LARGE SCALE GENOMIC DNA]</scope>
    <source>
        <strain>DSM 265 / 1930</strain>
    </source>
</reference>
<feature type="chain" id="PRO_1000084198" description="Histidinol-phosphate aminotransferase">
    <location>
        <begin position="1"/>
        <end position="360"/>
    </location>
</feature>
<feature type="modified residue" description="N6-(pyridoxal phosphate)lysine" evidence="1">
    <location>
        <position position="218"/>
    </location>
</feature>